<proteinExistence type="evidence at protein level"/>
<feature type="chain" id="PRO_0000363358" description="Polyamine-transporting ATPase 13A3">
    <location>
        <begin position="1"/>
        <end position="1219"/>
    </location>
</feature>
<feature type="topological domain" description="Cytoplasmic" evidence="3">
    <location>
        <begin position="1"/>
        <end position="28"/>
    </location>
</feature>
<feature type="intramembrane region" evidence="3">
    <location>
        <begin position="29"/>
        <end position="49"/>
    </location>
</feature>
<feature type="topological domain" description="Cytoplasmic" evidence="3">
    <location>
        <begin position="50"/>
        <end position="201"/>
    </location>
</feature>
<feature type="transmembrane region" description="Helical" evidence="6">
    <location>
        <begin position="202"/>
        <end position="222"/>
    </location>
</feature>
<feature type="topological domain" description="Lumenal" evidence="3">
    <location>
        <begin position="223"/>
        <end position="228"/>
    </location>
</feature>
<feature type="transmembrane region" description="Helical" evidence="6">
    <location>
        <begin position="229"/>
        <end position="249"/>
    </location>
</feature>
<feature type="topological domain" description="Cytoplasmic" evidence="3">
    <location>
        <begin position="250"/>
        <end position="405"/>
    </location>
</feature>
<feature type="transmembrane region" description="Helical" evidence="6">
    <location>
        <begin position="406"/>
        <end position="426"/>
    </location>
</feature>
<feature type="topological domain" description="Lumenal" evidence="3">
    <location>
        <begin position="427"/>
        <end position="444"/>
    </location>
</feature>
<feature type="transmembrane region" description="Helical" evidence="6">
    <location>
        <begin position="445"/>
        <end position="465"/>
    </location>
</feature>
<feature type="topological domain" description="Cytoplasmic" evidence="3">
    <location>
        <begin position="466"/>
        <end position="936"/>
    </location>
</feature>
<feature type="transmembrane region" description="Helical" evidence="6">
    <location>
        <begin position="937"/>
        <end position="957"/>
    </location>
</feature>
<feature type="topological domain" description="Lumenal" evidence="3">
    <location>
        <position position="958"/>
    </location>
</feature>
<feature type="transmembrane region" description="Helical" evidence="6">
    <location>
        <begin position="959"/>
        <end position="979"/>
    </location>
</feature>
<feature type="topological domain" description="Cytoplasmic" evidence="3">
    <location>
        <begin position="980"/>
        <end position="995"/>
    </location>
</feature>
<feature type="transmembrane region" description="Helical" evidence="6">
    <location>
        <begin position="996"/>
        <end position="1016"/>
    </location>
</feature>
<feature type="topological domain" description="Lumenal" evidence="3">
    <location>
        <begin position="1017"/>
        <end position="1066"/>
    </location>
</feature>
<feature type="transmembrane region" description="Helical" evidence="6">
    <location>
        <begin position="1067"/>
        <end position="1087"/>
    </location>
</feature>
<feature type="topological domain" description="Cytoplasmic" evidence="3">
    <location>
        <begin position="1088"/>
        <end position="1098"/>
    </location>
</feature>
<feature type="transmembrane region" description="Helical" evidence="6">
    <location>
        <begin position="1099"/>
        <end position="1119"/>
    </location>
</feature>
<feature type="topological domain" description="Lumenal" evidence="3">
    <location>
        <begin position="1120"/>
        <end position="1136"/>
    </location>
</feature>
<feature type="transmembrane region" description="Helical" evidence="6">
    <location>
        <begin position="1137"/>
        <end position="1157"/>
    </location>
</feature>
<feature type="topological domain" description="Cytoplasmic" evidence="3">
    <location>
        <begin position="1158"/>
        <end position="1219"/>
    </location>
</feature>
<feature type="active site" description="4-aspartylphosphate intermediate" evidence="4">
    <location>
        <position position="494"/>
    </location>
</feature>
<feature type="binding site" evidence="2">
    <location>
        <begin position="494"/>
        <end position="496"/>
    </location>
    <ligand>
        <name>ATP</name>
        <dbReference type="ChEBI" id="CHEBI:30616"/>
    </ligand>
</feature>
<feature type="binding site" evidence="2">
    <location>
        <position position="494"/>
    </location>
    <ligand>
        <name>Mg(2+)</name>
        <dbReference type="ChEBI" id="CHEBI:18420"/>
    </ligand>
</feature>
<feature type="binding site" evidence="2">
    <location>
        <position position="496"/>
    </location>
    <ligand>
        <name>Mg(2+)</name>
        <dbReference type="ChEBI" id="CHEBI:18420"/>
    </ligand>
</feature>
<feature type="binding site" evidence="5">
    <location>
        <position position="624"/>
    </location>
    <ligand>
        <name>ATP</name>
        <dbReference type="ChEBI" id="CHEBI:30616"/>
    </ligand>
</feature>
<feature type="binding site" evidence="2">
    <location>
        <position position="680"/>
    </location>
    <ligand>
        <name>ATP</name>
        <dbReference type="ChEBI" id="CHEBI:30616"/>
    </ligand>
</feature>
<feature type="binding site" evidence="2">
    <location>
        <position position="746"/>
    </location>
    <ligand>
        <name>ATP</name>
        <dbReference type="ChEBI" id="CHEBI:30616"/>
    </ligand>
</feature>
<feature type="binding site" evidence="2">
    <location>
        <begin position="879"/>
        <end position="883"/>
    </location>
    <ligand>
        <name>ATP</name>
        <dbReference type="ChEBI" id="CHEBI:30616"/>
    </ligand>
</feature>
<feature type="binding site" evidence="2">
    <location>
        <position position="879"/>
    </location>
    <ligand>
        <name>Mg(2+)</name>
        <dbReference type="ChEBI" id="CHEBI:18420"/>
    </ligand>
</feature>
<feature type="binding site" evidence="1">
    <location>
        <position position="883"/>
    </location>
    <ligand>
        <name>Mg(2+)</name>
        <dbReference type="ChEBI" id="CHEBI:18420"/>
    </ligand>
</feature>
<feature type="modified residue" description="Phosphoserine" evidence="11 12">
    <location>
        <position position="813"/>
    </location>
</feature>
<feature type="splice variant" id="VSP_036301" description="In isoform 2." evidence="8">
    <original>E</original>
    <variation>ESFFLDTVLWKVVFNRDKQGECRFSTTQPPQ</variation>
    <location>
        <position position="1154"/>
    </location>
</feature>
<sequence length="1219" mass="137469">MDKEERKTINKGQEDEMEIHGYNLCRWKLAMVFVGVICTGGFLLLLLYWLPEWRVKATCVRAAVKDCEVVLLRTTDEFRVWFCAKIHFLPVENQPNLNAKCLVNEVSNGHAVHLTEENRCEMNKYSQSQSQQMRYFTHHSIRYFWNDAIHNFDFLKGLDEGVSCASLYEKHSAGLTQGMHAYRKLIYGVNEIAVKVPSVFKLLIKEVLNPFYIFQLFSVILWSVDEYYYYALAIVIMSVVSIISSLYSIRKQYVMLHDMVATHSTVRVSVCRENEEIEEIFSTDLVPGDVMIIPLNGTVMPCDAVLINGTCIVNESMLTGESVPVTKTNLPNPSVDVKGMGEEQYSPETHKRHTLFCGTTVIQTRFYTGELVKAIVVRTGFSTSKGQLVRSILYPKPTDFKLYRDAYLFLLCLVVVAGIGFIYTIINSILNEKEVQEIIIKSLDIITITVPPALPAAMTAGIVYAQRRLKKVGIFCISPQRINICGQLNLVCFDKTGTLTEDGLDLWGIQRVENTRFLLPEDNVCSEMLVKSQFVACMATCHSLTKIEGVLSGDPLDLKMFEAIGWILEEATEEETALHNRIMPTVVRPSKQLLPEPTTAGNQEMELFELPAIYEIGIVRQFPFSSALQRMSVVARTLGEKRMDAYMKGAPEVVASLCKPETVPVDFEKVLEDYTKQGFRVIALAHRKLESKLTWHKVQHISRDAIENNMDFMGLIIMQNKLKQETPAVLEDLHKANIRTVMVTGDNMLTAVSVARDCGMILPQDKVIIAEALPPKDGKVAKINWHYTDSLSQCSESSAIDSEAIPIKLAHDSLEDLEVTRYHFAMNGKSFSVILEHFQDLVPKLMLHGTVFARMAPDQKTQLVEALQNVDYFVGMCGDGANDCGALKRAHGGISLSELEASVASPFTSKTPSISCVPNLIREGRAALMTSFCVFKFMALYSIIQYFSVTLLYSILSNLGDFQFLFIDLAIILVVVFTMSLNPAWKELVAQRPPSGLISGALLFSVLSQIVISVGFQSLGFFWVKQYKVCDPNSDVCNTTRSACWNSSHLYNGTELDSCKIQNYENTTVFFISSFQYLTVAVAFSKGKPFRQPCYKNYFFVISVIILYVFILFIMLHPVASVDQVLEIMCVPYQWRIYMLIIVLINAFVSITVEESVDRWGKCCLSWALSCRKKTPKAKYMYLAQELRFDPEWPPKPQTTTEAKAVVKENGSCQIITIA</sequence>
<reference key="1">
    <citation type="journal article" date="2004" name="Biochem. Biophys. Res. Commun.">
        <title>Characterization of the P5 subfamily of P-type transport ATPases in mice.</title>
        <authorList>
            <person name="Schultheis P.J."/>
            <person name="Hagen T.T."/>
            <person name="O'Toole K.K."/>
            <person name="Tachibana A."/>
            <person name="Burke C.R."/>
            <person name="McGill D.L."/>
            <person name="Okunade G.W."/>
            <person name="Shull G.E."/>
        </authorList>
    </citation>
    <scope>NUCLEOTIDE SEQUENCE [MRNA] (ISOFORMS 1 AND 2)</scope>
    <scope>TISSUE SPECIFICITY</scope>
</reference>
<reference key="2">
    <citation type="journal article" date="2009" name="Immunity">
        <title>The phagosomal proteome in interferon-gamma-activated macrophages.</title>
        <authorList>
            <person name="Trost M."/>
            <person name="English L."/>
            <person name="Lemieux S."/>
            <person name="Courcelles M."/>
            <person name="Desjardins M."/>
            <person name="Thibault P."/>
        </authorList>
    </citation>
    <scope>PHOSPHORYLATION [LARGE SCALE ANALYSIS] AT SER-813</scope>
    <scope>IDENTIFICATION BY MASS SPECTROMETRY [LARGE SCALE ANALYSIS]</scope>
</reference>
<reference key="3">
    <citation type="journal article" date="2010" name="Cell">
        <title>A tissue-specific atlas of mouse protein phosphorylation and expression.</title>
        <authorList>
            <person name="Huttlin E.L."/>
            <person name="Jedrychowski M.P."/>
            <person name="Elias J.E."/>
            <person name="Goswami T."/>
            <person name="Rad R."/>
            <person name="Beausoleil S.A."/>
            <person name="Villen J."/>
            <person name="Haas W."/>
            <person name="Sowa M.E."/>
            <person name="Gygi S.P."/>
        </authorList>
    </citation>
    <scope>PHOSPHORYLATION [LARGE SCALE ANALYSIS] AT SER-813</scope>
    <scope>IDENTIFICATION BY MASS SPECTROMETRY [LARGE SCALE ANALYSIS]</scope>
    <source>
        <tissue>Brain</tissue>
        <tissue>Brown adipose tissue</tissue>
        <tissue>Heart</tissue>
        <tissue>Kidney</tissue>
        <tissue>Lung</tissue>
        <tissue>Pancreas</tissue>
        <tissue>Spleen</tissue>
    </source>
</reference>
<accession>Q5XF89</accession>
<gene>
    <name evidence="10" type="primary">Atp13a3</name>
    <name type="synonym">Gm542</name>
</gene>
<protein>
    <recommendedName>
        <fullName>Polyamine-transporting ATPase 13A3</fullName>
    </recommendedName>
    <alternativeName>
        <fullName evidence="3">Putrescine transporting ATPase</fullName>
        <ecNumber evidence="3">7.6.2.16</ecNumber>
    </alternativeName>
</protein>
<keyword id="KW-0025">Alternative splicing</keyword>
<keyword id="KW-0067">ATP-binding</keyword>
<keyword id="KW-0967">Endosome</keyword>
<keyword id="KW-0460">Magnesium</keyword>
<keyword id="KW-0472">Membrane</keyword>
<keyword id="KW-0479">Metal-binding</keyword>
<keyword id="KW-0547">Nucleotide-binding</keyword>
<keyword id="KW-0597">Phosphoprotein</keyword>
<keyword id="KW-1185">Reference proteome</keyword>
<keyword id="KW-1278">Translocase</keyword>
<keyword id="KW-0812">Transmembrane</keyword>
<keyword id="KW-1133">Transmembrane helix</keyword>
<comment type="function">
    <text evidence="3">ATP-driven pump involved in endocytosis-dependent polyamine transport. Uses ATP as an energy source to transfer polyamine precursor putrescine from the endosomal compartment to the cytosol.</text>
</comment>
<comment type="catalytic activity">
    <reaction evidence="3">
        <text>putrescine(out) + ATP + H2O = putrescine(in) + ADP + phosphate + H(+)</text>
        <dbReference type="Rhea" id="RHEA:29995"/>
        <dbReference type="ChEBI" id="CHEBI:15377"/>
        <dbReference type="ChEBI" id="CHEBI:15378"/>
        <dbReference type="ChEBI" id="CHEBI:30616"/>
        <dbReference type="ChEBI" id="CHEBI:43474"/>
        <dbReference type="ChEBI" id="CHEBI:326268"/>
        <dbReference type="ChEBI" id="CHEBI:456216"/>
        <dbReference type="EC" id="7.6.2.16"/>
    </reaction>
    <physiologicalReaction direction="left-to-right" evidence="3">
        <dbReference type="Rhea" id="RHEA:29996"/>
    </physiologicalReaction>
</comment>
<comment type="subcellular location">
    <subcellularLocation>
        <location evidence="3">Recycling endosome membrane</location>
        <topology evidence="6">Multi-pass membrane protein</topology>
    </subcellularLocation>
    <subcellularLocation>
        <location evidence="3">Early endosome membrane</location>
        <topology evidence="6">Multi-pass membrane protein</topology>
    </subcellularLocation>
    <subcellularLocation>
        <location evidence="3">Late endosome membrane</location>
        <topology evidence="6">Multi-pass membrane protein</topology>
    </subcellularLocation>
    <text evidence="3">Mainly targeted to the recycling endosomes and to a lesser extent to the early and late endosomes.</text>
</comment>
<comment type="alternative products">
    <event type="alternative splicing"/>
    <isoform>
        <id>Q5XF89-1</id>
        <name>1</name>
        <sequence type="displayed"/>
    </isoform>
    <isoform>
        <id>Q5XF89-2</id>
        <name>2</name>
        <sequence type="described" ref="VSP_036301"/>
    </isoform>
</comment>
<comment type="tissue specificity">
    <text evidence="7">Expression is greatest in liver, followed by kidney, colon, stomach, brain and small intestine. Isoform 1 is highly expressed in the kidney while isoform 2 is highly expressed in the brain.</text>
</comment>
<comment type="similarity">
    <text evidence="9">Belongs to the cation transport ATPase (P-type) (TC 3.A.3) family. Type V subfamily.</text>
</comment>
<name>AT133_MOUSE</name>
<organism>
    <name type="scientific">Mus musculus</name>
    <name type="common">Mouse</name>
    <dbReference type="NCBI Taxonomy" id="10090"/>
    <lineage>
        <taxon>Eukaryota</taxon>
        <taxon>Metazoa</taxon>
        <taxon>Chordata</taxon>
        <taxon>Craniata</taxon>
        <taxon>Vertebrata</taxon>
        <taxon>Euteleostomi</taxon>
        <taxon>Mammalia</taxon>
        <taxon>Eutheria</taxon>
        <taxon>Euarchontoglires</taxon>
        <taxon>Glires</taxon>
        <taxon>Rodentia</taxon>
        <taxon>Myomorpha</taxon>
        <taxon>Muroidea</taxon>
        <taxon>Muridae</taxon>
        <taxon>Murinae</taxon>
        <taxon>Mus</taxon>
        <taxon>Mus</taxon>
    </lineage>
</organism>
<evidence type="ECO:0000250" key="1"/>
<evidence type="ECO:0000250" key="2">
    <source>
        <dbReference type="UniProtKB" id="P39986"/>
    </source>
</evidence>
<evidence type="ECO:0000250" key="3">
    <source>
        <dbReference type="UniProtKB" id="Q9H7F0"/>
    </source>
</evidence>
<evidence type="ECO:0000250" key="4">
    <source>
        <dbReference type="UniProtKB" id="Q9NQ11"/>
    </source>
</evidence>
<evidence type="ECO:0000250" key="5">
    <source>
        <dbReference type="UniProtKB" id="Q9Y2Q0"/>
    </source>
</evidence>
<evidence type="ECO:0000255" key="6"/>
<evidence type="ECO:0000269" key="7">
    <source>
    </source>
</evidence>
<evidence type="ECO:0000303" key="8">
    <source>
    </source>
</evidence>
<evidence type="ECO:0000305" key="9"/>
<evidence type="ECO:0000312" key="10">
    <source>
        <dbReference type="MGI" id="MGI:2685387"/>
    </source>
</evidence>
<evidence type="ECO:0007744" key="11">
    <source>
    </source>
</evidence>
<evidence type="ECO:0007744" key="12">
    <source>
    </source>
</evidence>
<dbReference type="EC" id="7.6.2.16" evidence="3"/>
<dbReference type="EMBL" id="BK005558">
    <property type="protein sequence ID" value="DAA05589.1"/>
    <property type="molecule type" value="mRNA"/>
</dbReference>
<dbReference type="CCDS" id="CCDS49820.1">
    <molecule id="Q5XF89-1"/>
</dbReference>
<dbReference type="CCDS" id="CCDS49821.1">
    <molecule id="Q5XF89-2"/>
</dbReference>
<dbReference type="RefSeq" id="NP_001121566.1">
    <molecule id="Q5XF89-1"/>
    <property type="nucleotide sequence ID" value="NM_001128094.1"/>
</dbReference>
<dbReference type="RefSeq" id="NP_001121568.1">
    <molecule id="Q5XF89-2"/>
    <property type="nucleotide sequence ID" value="NM_001128096.1"/>
</dbReference>
<dbReference type="RefSeq" id="XP_036015785.1">
    <molecule id="Q5XF89-2"/>
    <property type="nucleotide sequence ID" value="XM_036159892.1"/>
</dbReference>
<dbReference type="SMR" id="Q5XF89"/>
<dbReference type="BioGRID" id="230239">
    <property type="interactions" value="1"/>
</dbReference>
<dbReference type="FunCoup" id="Q5XF89">
    <property type="interactions" value="375"/>
</dbReference>
<dbReference type="STRING" id="10090.ENSMUSP00000128224"/>
<dbReference type="GlyGen" id="Q5XF89">
    <property type="glycosylation" value="2 sites, 2 N-linked glycans (2 sites)"/>
</dbReference>
<dbReference type="iPTMnet" id="Q5XF89"/>
<dbReference type="PhosphoSitePlus" id="Q5XF89"/>
<dbReference type="SwissPalm" id="Q5XF89"/>
<dbReference type="jPOST" id="Q5XF89"/>
<dbReference type="PaxDb" id="10090-ENSMUSP00000051645"/>
<dbReference type="PeptideAtlas" id="Q5XF89"/>
<dbReference type="ProteomicsDB" id="277084">
    <molecule id="Q5XF89-1"/>
</dbReference>
<dbReference type="ProteomicsDB" id="277085">
    <molecule id="Q5XF89-2"/>
</dbReference>
<dbReference type="Pumba" id="Q5XF89"/>
<dbReference type="Antibodypedia" id="33892">
    <property type="antibodies" value="64 antibodies from 13 providers"/>
</dbReference>
<dbReference type="Ensembl" id="ENSMUST00000061350.13">
    <molecule id="Q5XF89-1"/>
    <property type="protein sequence ID" value="ENSMUSP00000051645.7"/>
    <property type="gene ID" value="ENSMUSG00000022533.15"/>
</dbReference>
<dbReference type="Ensembl" id="ENSMUST00000100013.9">
    <molecule id="Q5XF89-2"/>
    <property type="protein sequence ID" value="ENSMUSP00000128224.2"/>
    <property type="gene ID" value="ENSMUSG00000022533.15"/>
</dbReference>
<dbReference type="GeneID" id="224088"/>
<dbReference type="KEGG" id="mmu:224088"/>
<dbReference type="UCSC" id="uc012aee.1">
    <molecule id="Q5XF89-2"/>
    <property type="organism name" value="mouse"/>
</dbReference>
<dbReference type="UCSC" id="uc012aef.1">
    <molecule id="Q5XF89-1"/>
    <property type="organism name" value="mouse"/>
</dbReference>
<dbReference type="AGR" id="MGI:2685387"/>
<dbReference type="CTD" id="79572"/>
<dbReference type="MGI" id="MGI:2685387">
    <property type="gene designation" value="Atp13a3"/>
</dbReference>
<dbReference type="VEuPathDB" id="HostDB:ENSMUSG00000022533"/>
<dbReference type="eggNOG" id="KOG0208">
    <property type="taxonomic scope" value="Eukaryota"/>
</dbReference>
<dbReference type="GeneTree" id="ENSGT00940000155941"/>
<dbReference type="HOGENOM" id="CLU_001828_0_0_1"/>
<dbReference type="InParanoid" id="Q5XF89"/>
<dbReference type="OMA" id="FSCFQYM"/>
<dbReference type="OrthoDB" id="22377at9989"/>
<dbReference type="TreeFam" id="TF300331"/>
<dbReference type="BioGRID-ORCS" id="224088">
    <property type="hits" value="4 hits in 78 CRISPR screens"/>
</dbReference>
<dbReference type="ChiTaRS" id="Atp13a3">
    <property type="organism name" value="mouse"/>
</dbReference>
<dbReference type="PRO" id="PR:Q5XF89"/>
<dbReference type="Proteomes" id="UP000000589">
    <property type="component" value="Chromosome 16"/>
</dbReference>
<dbReference type="RNAct" id="Q5XF89">
    <property type="molecule type" value="protein"/>
</dbReference>
<dbReference type="Bgee" id="ENSMUSG00000022533">
    <property type="expression patterns" value="Expressed in secondary oocyte and 256 other cell types or tissues"/>
</dbReference>
<dbReference type="ExpressionAtlas" id="Q5XF89">
    <property type="expression patterns" value="baseline and differential"/>
</dbReference>
<dbReference type="GO" id="GO:0031901">
    <property type="term" value="C:early endosome membrane"/>
    <property type="evidence" value="ECO:0000250"/>
    <property type="project" value="UniProtKB"/>
</dbReference>
<dbReference type="GO" id="GO:0031902">
    <property type="term" value="C:late endosome membrane"/>
    <property type="evidence" value="ECO:0000250"/>
    <property type="project" value="UniProtKB"/>
</dbReference>
<dbReference type="GO" id="GO:0055038">
    <property type="term" value="C:recycling endosome membrane"/>
    <property type="evidence" value="ECO:0000250"/>
    <property type="project" value="UniProtKB"/>
</dbReference>
<dbReference type="GO" id="GO:0015594">
    <property type="term" value="F:ABC-type putrescine transporter activity"/>
    <property type="evidence" value="ECO:0007669"/>
    <property type="project" value="UniProtKB-EC"/>
</dbReference>
<dbReference type="GO" id="GO:0005524">
    <property type="term" value="F:ATP binding"/>
    <property type="evidence" value="ECO:0007669"/>
    <property type="project" value="UniProtKB-KW"/>
</dbReference>
<dbReference type="GO" id="GO:0016887">
    <property type="term" value="F:ATP hydrolysis activity"/>
    <property type="evidence" value="ECO:0007669"/>
    <property type="project" value="InterPro"/>
</dbReference>
<dbReference type="GO" id="GO:0019829">
    <property type="term" value="F:ATPase-coupled monoatomic cation transmembrane transporter activity"/>
    <property type="evidence" value="ECO:0007669"/>
    <property type="project" value="InterPro"/>
</dbReference>
<dbReference type="GO" id="GO:0046872">
    <property type="term" value="F:metal ion binding"/>
    <property type="evidence" value="ECO:0007669"/>
    <property type="project" value="UniProtKB-KW"/>
</dbReference>
<dbReference type="GO" id="GO:0015662">
    <property type="term" value="F:P-type ion transporter activity"/>
    <property type="evidence" value="ECO:0007669"/>
    <property type="project" value="InterPro"/>
</dbReference>
<dbReference type="GO" id="GO:0140358">
    <property type="term" value="F:P-type transmembrane transporter activity"/>
    <property type="evidence" value="ECO:0000250"/>
    <property type="project" value="UniProtKB"/>
</dbReference>
<dbReference type="CDD" id="cd07542">
    <property type="entry name" value="P-type_ATPase_cation"/>
    <property type="match status" value="1"/>
</dbReference>
<dbReference type="FunFam" id="1.20.1110.10:FF:000023">
    <property type="entry name" value="Cation-transporting ATPase"/>
    <property type="match status" value="1"/>
</dbReference>
<dbReference type="FunFam" id="1.20.1110.10:FF:000026">
    <property type="entry name" value="Cation-transporting ATPase"/>
    <property type="match status" value="1"/>
</dbReference>
<dbReference type="FunFam" id="2.70.150.10:FF:000017">
    <property type="entry name" value="Cation-transporting ATPase"/>
    <property type="match status" value="1"/>
</dbReference>
<dbReference type="FunFam" id="3.40.1110.10:FF:000026">
    <property type="entry name" value="Cation-transporting ATPase"/>
    <property type="match status" value="1"/>
</dbReference>
<dbReference type="FunFam" id="3.40.50.1000:FF:000045">
    <property type="entry name" value="Cation-transporting ATPase"/>
    <property type="match status" value="1"/>
</dbReference>
<dbReference type="Gene3D" id="3.40.1110.10">
    <property type="entry name" value="Calcium-transporting ATPase, cytoplasmic domain N"/>
    <property type="match status" value="1"/>
</dbReference>
<dbReference type="Gene3D" id="2.70.150.10">
    <property type="entry name" value="Calcium-transporting ATPase, cytoplasmic transduction domain A"/>
    <property type="match status" value="1"/>
</dbReference>
<dbReference type="Gene3D" id="1.20.1110.10">
    <property type="entry name" value="Calcium-transporting ATPase, transmembrane domain"/>
    <property type="match status" value="1"/>
</dbReference>
<dbReference type="Gene3D" id="3.40.50.1000">
    <property type="entry name" value="HAD superfamily/HAD-like"/>
    <property type="match status" value="1"/>
</dbReference>
<dbReference type="InterPro" id="IPR004014">
    <property type="entry name" value="ATPase_P-typ_cation-transptr_N"/>
</dbReference>
<dbReference type="InterPro" id="IPR023299">
    <property type="entry name" value="ATPase_P-typ_cyto_dom_N"/>
</dbReference>
<dbReference type="InterPro" id="IPR018303">
    <property type="entry name" value="ATPase_P-typ_P_site"/>
</dbReference>
<dbReference type="InterPro" id="IPR023298">
    <property type="entry name" value="ATPase_P-typ_TM_dom_sf"/>
</dbReference>
<dbReference type="InterPro" id="IPR008250">
    <property type="entry name" value="ATPase_P-typ_transduc_dom_A_sf"/>
</dbReference>
<dbReference type="InterPro" id="IPR036412">
    <property type="entry name" value="HAD-like_sf"/>
</dbReference>
<dbReference type="InterPro" id="IPR023214">
    <property type="entry name" value="HAD_sf"/>
</dbReference>
<dbReference type="InterPro" id="IPR006544">
    <property type="entry name" value="P-type_TPase_V"/>
</dbReference>
<dbReference type="InterPro" id="IPR047819">
    <property type="entry name" value="P5A-ATPase_N"/>
</dbReference>
<dbReference type="InterPro" id="IPR047821">
    <property type="entry name" value="P5B-type_ATPase"/>
</dbReference>
<dbReference type="InterPro" id="IPR001757">
    <property type="entry name" value="P_typ_ATPase"/>
</dbReference>
<dbReference type="InterPro" id="IPR044492">
    <property type="entry name" value="P_typ_ATPase_HD_dom"/>
</dbReference>
<dbReference type="NCBIfam" id="TIGR01494">
    <property type="entry name" value="ATPase_P-type"/>
    <property type="match status" value="2"/>
</dbReference>
<dbReference type="NCBIfam" id="TIGR01657">
    <property type="entry name" value="P-ATPase-V"/>
    <property type="match status" value="1"/>
</dbReference>
<dbReference type="PANTHER" id="PTHR45630">
    <property type="entry name" value="CATION-TRANSPORTING ATPASE-RELATED"/>
    <property type="match status" value="1"/>
</dbReference>
<dbReference type="PANTHER" id="PTHR45630:SF12">
    <property type="entry name" value="POLYAMINE-TRANSPORTING ATPASE 13A3"/>
    <property type="match status" value="1"/>
</dbReference>
<dbReference type="Pfam" id="PF13246">
    <property type="entry name" value="Cation_ATPase"/>
    <property type="match status" value="1"/>
</dbReference>
<dbReference type="Pfam" id="PF00690">
    <property type="entry name" value="Cation_ATPase_N"/>
    <property type="match status" value="1"/>
</dbReference>
<dbReference type="Pfam" id="PF00122">
    <property type="entry name" value="E1-E2_ATPase"/>
    <property type="match status" value="1"/>
</dbReference>
<dbReference type="Pfam" id="PF12409">
    <property type="entry name" value="P5-ATPase"/>
    <property type="match status" value="1"/>
</dbReference>
<dbReference type="PRINTS" id="PR00119">
    <property type="entry name" value="CATATPASE"/>
</dbReference>
<dbReference type="SFLD" id="SFLDG00002">
    <property type="entry name" value="C1.7:_P-type_atpase_like"/>
    <property type="match status" value="1"/>
</dbReference>
<dbReference type="SFLD" id="SFLDF00027">
    <property type="entry name" value="p-type_atpase"/>
    <property type="match status" value="1"/>
</dbReference>
<dbReference type="SUPFAM" id="SSF81653">
    <property type="entry name" value="Calcium ATPase, transduction domain A"/>
    <property type="match status" value="1"/>
</dbReference>
<dbReference type="SUPFAM" id="SSF81665">
    <property type="entry name" value="Calcium ATPase, transmembrane domain M"/>
    <property type="match status" value="1"/>
</dbReference>
<dbReference type="SUPFAM" id="SSF56784">
    <property type="entry name" value="HAD-like"/>
    <property type="match status" value="1"/>
</dbReference>
<dbReference type="SUPFAM" id="SSF81660">
    <property type="entry name" value="Metal cation-transporting ATPase, ATP-binding domain N"/>
    <property type="match status" value="1"/>
</dbReference>
<dbReference type="PROSITE" id="PS00154">
    <property type="entry name" value="ATPASE_E1_E2"/>
    <property type="match status" value="1"/>
</dbReference>